<sequence length="139" mass="15307">MILLDTNVISEPLRPQPNERVVAWLDSLILEDVYLSAITVAELRLGVALLLNGKKKNVLHERLEQSILPLFAGRILPFDEPVAAIYAQIRSYAKTHGKEIAAADGYIAATAKQHSLTVATRDTGSFFAADVAVFNPWHD</sequence>
<gene>
    <name type="primary">fitB</name>
    <name type="synonym">vapC</name>
    <name type="ordered locus">NGO_0907</name>
</gene>
<protein>
    <recommendedName>
        <fullName>Toxin FitB</fullName>
    </recommendedName>
    <alternativeName>
        <fullName>Ribonuclease FitB</fullName>
        <shortName>RNase FitB</shortName>
        <ecNumber evidence="1">3.1.-.-</ecNumber>
    </alternativeName>
    <alternativeName>
        <fullName>Trafficking protein B</fullName>
    </alternativeName>
</protein>
<keyword id="KW-0002">3D-structure</keyword>
<keyword id="KW-0238">DNA-binding</keyword>
<keyword id="KW-0378">Hydrolase</keyword>
<keyword id="KW-0460">Magnesium</keyword>
<keyword id="KW-0479">Metal-binding</keyword>
<keyword id="KW-0540">Nuclease</keyword>
<keyword id="KW-1185">Reference proteome</keyword>
<keyword id="KW-1277">Toxin-antitoxin system</keyword>
<name>FITB_NEIG1</name>
<organism>
    <name type="scientific">Neisseria gonorrhoeae (strain ATCC 700825 / FA 1090)</name>
    <dbReference type="NCBI Taxonomy" id="242231"/>
    <lineage>
        <taxon>Bacteria</taxon>
        <taxon>Pseudomonadati</taxon>
        <taxon>Pseudomonadota</taxon>
        <taxon>Betaproteobacteria</taxon>
        <taxon>Neisseriales</taxon>
        <taxon>Neisseriaceae</taxon>
        <taxon>Neisseria</taxon>
    </lineage>
</organism>
<evidence type="ECO:0000255" key="1">
    <source>
        <dbReference type="HAMAP-Rule" id="MF_00265"/>
    </source>
</evidence>
<evidence type="ECO:0000269" key="2">
    <source>
    </source>
</evidence>
<evidence type="ECO:0000269" key="3">
    <source>
    </source>
</evidence>
<evidence type="ECO:0000269" key="4">
    <source>
    </source>
</evidence>
<evidence type="ECO:0007829" key="5">
    <source>
        <dbReference type="PDB" id="2H1C"/>
    </source>
</evidence>
<comment type="function">
    <text>Toxic component of a type II toxin-antitoxin (TA) system. Plays a role in the speed with which bacteria traverse human epithelial cells; disruption of the locus increases the speed of trafficking about 2-4-fold. FitAB binds to its own promoter better than FitA alone. The expected nuclease activity was not observed for the FitAB complex, perhaps because FitA (the antitoxin) prevents metal binding and thus catalysis by FitB.</text>
</comment>
<comment type="cofactor">
    <cofactor evidence="1">
        <name>Mg(2+)</name>
        <dbReference type="ChEBI" id="CHEBI:18420"/>
    </cofactor>
</comment>
<comment type="subunit">
    <text evidence="3 4">Forms a heterodimer with FitA, 4 FitAB heterodimers form a complex that binds to promoter DNA. The complex is also seen in solution. This protein does not actually contact DNA.</text>
</comment>
<comment type="disruption phenotype">
    <text evidence="2">Disruption of the fitAB locus leads to faster transepithelial cell trafficking of the bacterium; mutants adhere to and invade cells normally. Mutants grow normally in liquid culture but much faster within human cell lines A431 and T84; these latter 2 phenotypes were observed using MS11A bacteria with a disrupted fitAB locus.</text>
</comment>
<comment type="similarity">
    <text evidence="1">Belongs to the PINc/VapC protein family.</text>
</comment>
<accession>Q5F882</accession>
<accession>Q9RF91</accession>
<proteinExistence type="evidence at protein level"/>
<feature type="chain" id="PRO_0000407900" description="Toxin FitB">
    <location>
        <begin position="1"/>
        <end position="139"/>
    </location>
</feature>
<feature type="domain" description="PINc" evidence="1">
    <location>
        <begin position="2"/>
        <end position="123"/>
    </location>
</feature>
<feature type="binding site" evidence="1">
    <location>
        <position position="5"/>
    </location>
    <ligand>
        <name>Mg(2+)</name>
        <dbReference type="ChEBI" id="CHEBI:18420"/>
    </ligand>
</feature>
<feature type="binding site" evidence="1">
    <location>
        <position position="104"/>
    </location>
    <ligand>
        <name>Mg(2+)</name>
        <dbReference type="ChEBI" id="CHEBI:18420"/>
    </ligand>
</feature>
<feature type="strand" evidence="5">
    <location>
        <begin position="2"/>
        <end position="4"/>
    </location>
</feature>
<feature type="helix" evidence="5">
    <location>
        <begin position="6"/>
        <end position="9"/>
    </location>
</feature>
<feature type="helix" evidence="5">
    <location>
        <begin position="11"/>
        <end position="13"/>
    </location>
</feature>
<feature type="strand" evidence="5">
    <location>
        <begin position="14"/>
        <end position="16"/>
    </location>
</feature>
<feature type="helix" evidence="5">
    <location>
        <begin position="19"/>
        <end position="27"/>
    </location>
</feature>
<feature type="helix" evidence="5">
    <location>
        <begin position="30"/>
        <end position="32"/>
    </location>
</feature>
<feature type="strand" evidence="5">
    <location>
        <begin position="33"/>
        <end position="36"/>
    </location>
</feature>
<feature type="helix" evidence="5">
    <location>
        <begin position="37"/>
        <end position="48"/>
    </location>
</feature>
<feature type="helix" evidence="5">
    <location>
        <begin position="53"/>
        <end position="65"/>
    </location>
</feature>
<feature type="helix" evidence="5">
    <location>
        <begin position="68"/>
        <end position="71"/>
    </location>
</feature>
<feature type="helix" evidence="5">
    <location>
        <begin position="80"/>
        <end position="94"/>
    </location>
</feature>
<feature type="turn" evidence="5">
    <location>
        <begin position="95"/>
        <end position="97"/>
    </location>
</feature>
<feature type="helix" evidence="5">
    <location>
        <begin position="102"/>
        <end position="114"/>
    </location>
</feature>
<feature type="strand" evidence="5">
    <location>
        <begin position="117"/>
        <end position="119"/>
    </location>
</feature>
<feature type="helix" evidence="5">
    <location>
        <begin position="124"/>
        <end position="128"/>
    </location>
</feature>
<reference key="1">
    <citation type="journal article" date="2000" name="Infect. Immun.">
        <title>Isolation of Neisseria gonorrhoeae mutants that show enhanced trafficking across polarized T84 epithelial monolayers.</title>
        <authorList>
            <person name="Hopper S."/>
            <person name="Wilbur J.S."/>
            <person name="Vasquez B.L."/>
            <person name="Larson J."/>
            <person name="Clary S."/>
            <person name="Mehr I.J."/>
            <person name="Seifert H.S."/>
            <person name="So M."/>
        </authorList>
    </citation>
    <scope>NUCLEOTIDE SEQUENCE [GENOMIC DNA]</scope>
    <scope>DISRUPTION PHENOTYPE</scope>
    <source>
        <strain>ATCC 700825 / FA 1090</strain>
        <strain>MS11A</strain>
    </source>
</reference>
<reference key="2">
    <citation type="submission" date="2003-03" db="EMBL/GenBank/DDBJ databases">
        <title>The complete genome sequence of Neisseria gonorrhoeae.</title>
        <authorList>
            <person name="Lewis L.A."/>
            <person name="Gillaspy A.F."/>
            <person name="McLaughlin R.E."/>
            <person name="Gipson M."/>
            <person name="Ducey T.F."/>
            <person name="Ownbey T."/>
            <person name="Hartman K."/>
            <person name="Nydick C."/>
            <person name="Carson M.B."/>
            <person name="Vaughn J."/>
            <person name="Thomson C."/>
            <person name="Song L."/>
            <person name="Lin S."/>
            <person name="Yuan X."/>
            <person name="Najar F."/>
            <person name="Zhan M."/>
            <person name="Ren Q."/>
            <person name="Zhu H."/>
            <person name="Qi S."/>
            <person name="Kenton S.M."/>
            <person name="Lai H."/>
            <person name="White J.D."/>
            <person name="Clifton S."/>
            <person name="Roe B.A."/>
            <person name="Dyer D.W."/>
        </authorList>
    </citation>
    <scope>NUCLEOTIDE SEQUENCE [LARGE SCALE GENOMIC DNA]</scope>
    <source>
        <strain>ATCC 700825 / FA 1090</strain>
    </source>
</reference>
<reference key="3">
    <citation type="journal article" date="2005" name="Biochemistry">
        <title>Neisseria gonorrhoeae FitA interacts with FitB to bind DNA through its ribbon-helix-helix motif.</title>
        <authorList>
            <person name="Wilbur J.S."/>
            <person name="Chivers P.T."/>
            <person name="Mattison K."/>
            <person name="Potter L."/>
            <person name="Brennan R.G."/>
            <person name="So M."/>
        </authorList>
    </citation>
    <scope>DNA-BINDING</scope>
    <scope>SUBUNIT</scope>
    <source>
        <strain>ATCC 700825 / FA 1090</strain>
    </source>
</reference>
<reference key="4">
    <citation type="journal article" date="2006" name="J. Biol. Chem.">
        <title>Structure of FitAB from Neisseria gonorrhoeae bound to DNA reveals a tetramer of toxin-antitoxin heterodimers containing pin domains and ribbon-helix-helix motifs.</title>
        <authorList>
            <person name="Mattison K."/>
            <person name="Wilbur J.S."/>
            <person name="So M."/>
            <person name="Brennan R.G."/>
        </authorList>
    </citation>
    <scope>X-RAY CRYSTALLOGRAPHY (1.80 ANGSTROMS) OF 1-138 IN COMPLEX WITH FITA BOUND TO DNA</scope>
    <scope>SUBUNIT</scope>
    <source>
        <strain>ATCC 700825 / FA 1090</strain>
    </source>
</reference>
<dbReference type="EC" id="3.1.-.-" evidence="1"/>
<dbReference type="EMBL" id="AF200716">
    <property type="protein sequence ID" value="AAF19189.1"/>
    <property type="molecule type" value="Genomic_DNA"/>
</dbReference>
<dbReference type="EMBL" id="AE004969">
    <property type="protein sequence ID" value="AAW89605.1"/>
    <property type="molecule type" value="Genomic_DNA"/>
</dbReference>
<dbReference type="RefSeq" id="WP_003691083.1">
    <property type="nucleotide sequence ID" value="NC_002946.2"/>
</dbReference>
<dbReference type="RefSeq" id="YP_208017.1">
    <property type="nucleotide sequence ID" value="NC_002946.2"/>
</dbReference>
<dbReference type="PDB" id="2BSQ">
    <property type="method" value="X-ray"/>
    <property type="resolution" value="3.00 A"/>
    <property type="chains" value="A/B/C/D=1-139"/>
</dbReference>
<dbReference type="PDB" id="2H1C">
    <property type="method" value="X-ray"/>
    <property type="resolution" value="1.80 A"/>
    <property type="chains" value="A=1-138"/>
</dbReference>
<dbReference type="PDB" id="2H1O">
    <property type="method" value="X-ray"/>
    <property type="resolution" value="3.00 A"/>
    <property type="chains" value="A/B/C/D=1-138"/>
</dbReference>
<dbReference type="PDBsum" id="2BSQ"/>
<dbReference type="PDBsum" id="2H1C"/>
<dbReference type="PDBsum" id="2H1O"/>
<dbReference type="SMR" id="Q5F882"/>
<dbReference type="STRING" id="242231.NGO_0907"/>
<dbReference type="GeneID" id="66753236"/>
<dbReference type="KEGG" id="ngo:NGO_0907"/>
<dbReference type="PATRIC" id="fig|242231.10.peg.1067"/>
<dbReference type="HOGENOM" id="CLU_118482_8_2_4"/>
<dbReference type="EvolutionaryTrace" id="Q5F882"/>
<dbReference type="Proteomes" id="UP000000535">
    <property type="component" value="Chromosome"/>
</dbReference>
<dbReference type="GO" id="GO:0003677">
    <property type="term" value="F:DNA binding"/>
    <property type="evidence" value="ECO:0007669"/>
    <property type="project" value="UniProtKB-KW"/>
</dbReference>
<dbReference type="GO" id="GO:0000287">
    <property type="term" value="F:magnesium ion binding"/>
    <property type="evidence" value="ECO:0007669"/>
    <property type="project" value="UniProtKB-UniRule"/>
</dbReference>
<dbReference type="GO" id="GO:0004540">
    <property type="term" value="F:RNA nuclease activity"/>
    <property type="evidence" value="ECO:0007669"/>
    <property type="project" value="InterPro"/>
</dbReference>
<dbReference type="GO" id="GO:0044001">
    <property type="term" value="P:migration in host"/>
    <property type="evidence" value="ECO:0000315"/>
    <property type="project" value="UniProtKB"/>
</dbReference>
<dbReference type="CDD" id="cd18731">
    <property type="entry name" value="PIN_NgFitB-like"/>
    <property type="match status" value="1"/>
</dbReference>
<dbReference type="FunFam" id="3.40.50.1010:FF:000106">
    <property type="entry name" value="Toxin FitB"/>
    <property type="match status" value="1"/>
</dbReference>
<dbReference type="Gene3D" id="3.40.50.1010">
    <property type="entry name" value="5'-nuclease"/>
    <property type="match status" value="1"/>
</dbReference>
<dbReference type="HAMAP" id="MF_00265">
    <property type="entry name" value="VapC_Nob1"/>
    <property type="match status" value="1"/>
</dbReference>
<dbReference type="InterPro" id="IPR029060">
    <property type="entry name" value="PIN-like_dom_sf"/>
</dbReference>
<dbReference type="InterPro" id="IPR002716">
    <property type="entry name" value="PIN_dom"/>
</dbReference>
<dbReference type="InterPro" id="IPR050556">
    <property type="entry name" value="Type_II_TA_system_RNase"/>
</dbReference>
<dbReference type="InterPro" id="IPR022907">
    <property type="entry name" value="VapC_family"/>
</dbReference>
<dbReference type="PANTHER" id="PTHR33653">
    <property type="entry name" value="RIBONUCLEASE VAPC2"/>
    <property type="match status" value="1"/>
</dbReference>
<dbReference type="PANTHER" id="PTHR33653:SF1">
    <property type="entry name" value="RIBONUCLEASE VAPC2"/>
    <property type="match status" value="1"/>
</dbReference>
<dbReference type="Pfam" id="PF01850">
    <property type="entry name" value="PIN"/>
    <property type="match status" value="1"/>
</dbReference>
<dbReference type="SUPFAM" id="SSF88723">
    <property type="entry name" value="PIN domain-like"/>
    <property type="match status" value="1"/>
</dbReference>